<sequence>MDEFHRYGKEDNSRQQCFLYPLFFQEDLYAISHDHYLDGSSSSEPMEHLSSNDQFSFLTVKRLIGQIRQQNHSIVLFVNCAPNPLADCKKSSYSESVLEGLTLVLEVPFSIRSKYSVEGMNEWKSFRSIHSIFPFLEDKFPHSNYISDARIPYSIHPEILVRTFRRLIRDAPSLHPLRSVLYEYRNSPENLQRSIIVVPRVNTRFFLFLWNYYVYECESILFSLLKRSSHSRSLAHRPFPQRTHFHRKIKHIIIFSRRNSLKSIWLLKDPKINYVRYGERSIIAIKGTHLLVKKCRYYLLLFRQCYFHLWSEPYRVCSHQLSKNCSSSPGYFLRVRMNPLFVRTKMLDELFIADLITNEFDPIVPIVPILGLLAREKFCDVSGRPISKLSWTNLTDDDILNRFDQIWRNLFHYYSGSFGRDGLYRIKYILSLSCAKTLACKHKSTIRVVRKELGPELFQKSFSKEREFDSLPFSSKAAARSQRERIWHSDIPQINPLVNSWQKIQDLKIENLFDQ</sequence>
<geneLocation type="chloroplast"/>
<feature type="chain" id="PRO_0000143631" description="Maturase K">
    <location>
        <begin position="1"/>
        <end position="515"/>
    </location>
</feature>
<name>MATK_PINSI</name>
<evidence type="ECO:0000255" key="1">
    <source>
        <dbReference type="HAMAP-Rule" id="MF_01390"/>
    </source>
</evidence>
<protein>
    <recommendedName>
        <fullName evidence="1">Maturase K</fullName>
    </recommendedName>
    <alternativeName>
        <fullName evidence="1">Intron maturase</fullName>
    </alternativeName>
</protein>
<proteinExistence type="inferred from homology"/>
<reference key="1">
    <citation type="submission" date="2004-01" db="EMBL/GenBank/DDBJ databases">
        <title>Phylogeny and classification of Pinus.</title>
        <authorList>
            <person name="Gernandt D."/>
            <person name="Geada-Lopez G."/>
            <person name="Liston A."/>
        </authorList>
    </citation>
    <scope>NUCLEOTIDE SEQUENCE [GENOMIC DNA]</scope>
    <source>
        <tissue>Leaf</tissue>
    </source>
</reference>
<comment type="function">
    <text evidence="1">Usually encoded in the trnK tRNA gene intron. Probably assists in splicing its own and other chloroplast group II introns.</text>
</comment>
<comment type="subcellular location">
    <subcellularLocation>
        <location>Plastid</location>
        <location>Chloroplast</location>
    </subcellularLocation>
</comment>
<comment type="similarity">
    <text evidence="1">Belongs to the intron maturase 2 family. MatK subfamily.</text>
</comment>
<accession>Q6BDH1</accession>
<gene>
    <name evidence="1" type="primary">matK</name>
</gene>
<keyword id="KW-0150">Chloroplast</keyword>
<keyword id="KW-0507">mRNA processing</keyword>
<keyword id="KW-0934">Plastid</keyword>
<keyword id="KW-0694">RNA-binding</keyword>
<keyword id="KW-0819">tRNA processing</keyword>
<dbReference type="EMBL" id="AB161014">
    <property type="protein sequence ID" value="BAD32757.1"/>
    <property type="molecule type" value="Genomic_DNA"/>
</dbReference>
<dbReference type="GO" id="GO:0009507">
    <property type="term" value="C:chloroplast"/>
    <property type="evidence" value="ECO:0007669"/>
    <property type="project" value="UniProtKB-SubCell"/>
</dbReference>
<dbReference type="GO" id="GO:0003723">
    <property type="term" value="F:RNA binding"/>
    <property type="evidence" value="ECO:0007669"/>
    <property type="project" value="UniProtKB-KW"/>
</dbReference>
<dbReference type="GO" id="GO:0006397">
    <property type="term" value="P:mRNA processing"/>
    <property type="evidence" value="ECO:0007669"/>
    <property type="project" value="UniProtKB-KW"/>
</dbReference>
<dbReference type="GO" id="GO:0008380">
    <property type="term" value="P:RNA splicing"/>
    <property type="evidence" value="ECO:0007669"/>
    <property type="project" value="UniProtKB-UniRule"/>
</dbReference>
<dbReference type="GO" id="GO:0008033">
    <property type="term" value="P:tRNA processing"/>
    <property type="evidence" value="ECO:0007669"/>
    <property type="project" value="UniProtKB-KW"/>
</dbReference>
<dbReference type="HAMAP" id="MF_01390">
    <property type="entry name" value="MatK"/>
    <property type="match status" value="1"/>
</dbReference>
<dbReference type="InterPro" id="IPR024937">
    <property type="entry name" value="Domain_X"/>
</dbReference>
<dbReference type="InterPro" id="IPR002866">
    <property type="entry name" value="Maturase_MatK"/>
</dbReference>
<dbReference type="InterPro" id="IPR024942">
    <property type="entry name" value="Maturase_MatK_N"/>
</dbReference>
<dbReference type="PANTHER" id="PTHR34811">
    <property type="entry name" value="MATURASE K"/>
    <property type="match status" value="1"/>
</dbReference>
<dbReference type="PANTHER" id="PTHR34811:SF1">
    <property type="entry name" value="MATURASE K"/>
    <property type="match status" value="1"/>
</dbReference>
<dbReference type="Pfam" id="PF01348">
    <property type="entry name" value="Intron_maturas2"/>
    <property type="match status" value="1"/>
</dbReference>
<dbReference type="Pfam" id="PF01824">
    <property type="entry name" value="MatK_N"/>
    <property type="match status" value="1"/>
</dbReference>
<organism>
    <name type="scientific">Pinus sibirica</name>
    <name type="common">Siberian pine</name>
    <name type="synonym">Pinus cembra var. sibirica</name>
    <dbReference type="NCBI Taxonomy" id="62752"/>
    <lineage>
        <taxon>Eukaryota</taxon>
        <taxon>Viridiplantae</taxon>
        <taxon>Streptophyta</taxon>
        <taxon>Embryophyta</taxon>
        <taxon>Tracheophyta</taxon>
        <taxon>Spermatophyta</taxon>
        <taxon>Pinopsida</taxon>
        <taxon>Pinidae</taxon>
        <taxon>Conifers I</taxon>
        <taxon>Pinales</taxon>
        <taxon>Pinaceae</taxon>
        <taxon>Pinus</taxon>
        <taxon>Pinus subgen. Strobus</taxon>
    </lineage>
</organism>